<name>MUTH_YERPA</name>
<dbReference type="EMBL" id="CP000308">
    <property type="protein sequence ID" value="ABG12449.1"/>
    <property type="molecule type" value="Genomic_DNA"/>
</dbReference>
<dbReference type="RefSeq" id="WP_002209838.1">
    <property type="nucleotide sequence ID" value="NZ_CP009906.1"/>
</dbReference>
<dbReference type="SMR" id="Q1CAS3"/>
<dbReference type="GeneID" id="57973847"/>
<dbReference type="KEGG" id="ypa:YPA_0481"/>
<dbReference type="Proteomes" id="UP000001971">
    <property type="component" value="Chromosome"/>
</dbReference>
<dbReference type="GO" id="GO:0005737">
    <property type="term" value="C:cytoplasm"/>
    <property type="evidence" value="ECO:0007669"/>
    <property type="project" value="UniProtKB-SubCell"/>
</dbReference>
<dbReference type="GO" id="GO:0003677">
    <property type="term" value="F:DNA binding"/>
    <property type="evidence" value="ECO:0007669"/>
    <property type="project" value="InterPro"/>
</dbReference>
<dbReference type="GO" id="GO:0004519">
    <property type="term" value="F:endonuclease activity"/>
    <property type="evidence" value="ECO:0007669"/>
    <property type="project" value="UniProtKB-UniRule"/>
</dbReference>
<dbReference type="GO" id="GO:0006304">
    <property type="term" value="P:DNA modification"/>
    <property type="evidence" value="ECO:0007669"/>
    <property type="project" value="InterPro"/>
</dbReference>
<dbReference type="GO" id="GO:0006298">
    <property type="term" value="P:mismatch repair"/>
    <property type="evidence" value="ECO:0007669"/>
    <property type="project" value="UniProtKB-UniRule"/>
</dbReference>
<dbReference type="CDD" id="cd00583">
    <property type="entry name" value="MutH-like"/>
    <property type="match status" value="1"/>
</dbReference>
<dbReference type="FunFam" id="3.40.600.10:FF:000001">
    <property type="entry name" value="DNA mismatch repair protein MutH"/>
    <property type="match status" value="1"/>
</dbReference>
<dbReference type="Gene3D" id="3.40.600.10">
    <property type="entry name" value="DNA mismatch repair MutH/Restriction endonuclease, type II"/>
    <property type="match status" value="1"/>
</dbReference>
<dbReference type="HAMAP" id="MF_00759">
    <property type="entry name" value="MutH"/>
    <property type="match status" value="1"/>
</dbReference>
<dbReference type="InterPro" id="IPR004230">
    <property type="entry name" value="DNA_mismatch_repair_MutH"/>
</dbReference>
<dbReference type="InterPro" id="IPR011337">
    <property type="entry name" value="DNA_rep_MutH/RE_typeII_Sau3AI"/>
</dbReference>
<dbReference type="InterPro" id="IPR037057">
    <property type="entry name" value="DNA_rep_MutH/T2_RE_sf"/>
</dbReference>
<dbReference type="InterPro" id="IPR011335">
    <property type="entry name" value="Restrct_endonuc-II-like"/>
</dbReference>
<dbReference type="NCBIfam" id="TIGR02248">
    <property type="entry name" value="mutH_TIGR"/>
    <property type="match status" value="1"/>
</dbReference>
<dbReference type="NCBIfam" id="NF003458">
    <property type="entry name" value="PRK05070.1"/>
    <property type="match status" value="1"/>
</dbReference>
<dbReference type="Pfam" id="PF02976">
    <property type="entry name" value="MutH"/>
    <property type="match status" value="1"/>
</dbReference>
<dbReference type="SMART" id="SM00927">
    <property type="entry name" value="MutH"/>
    <property type="match status" value="1"/>
</dbReference>
<dbReference type="SUPFAM" id="SSF52980">
    <property type="entry name" value="Restriction endonuclease-like"/>
    <property type="match status" value="1"/>
</dbReference>
<comment type="function">
    <text evidence="1">Sequence-specific endonuclease that cleaves unmethylated GATC sequences. It is involved in DNA mismatch repair.</text>
</comment>
<comment type="subcellular location">
    <subcellularLocation>
        <location evidence="1">Cytoplasm</location>
    </subcellularLocation>
</comment>
<comment type="similarity">
    <text evidence="1">Belongs to the MutH family.</text>
</comment>
<keyword id="KW-0963">Cytoplasm</keyword>
<keyword id="KW-0227">DNA damage</keyword>
<keyword id="KW-0234">DNA repair</keyword>
<keyword id="KW-0255">Endonuclease</keyword>
<keyword id="KW-0378">Hydrolase</keyword>
<keyword id="KW-0540">Nuclease</keyword>
<gene>
    <name evidence="1" type="primary">mutH</name>
    <name type="ordered locus">YPA_0481</name>
</gene>
<evidence type="ECO:0000255" key="1">
    <source>
        <dbReference type="HAMAP-Rule" id="MF_00759"/>
    </source>
</evidence>
<organism>
    <name type="scientific">Yersinia pestis bv. Antiqua (strain Antiqua)</name>
    <dbReference type="NCBI Taxonomy" id="360102"/>
    <lineage>
        <taxon>Bacteria</taxon>
        <taxon>Pseudomonadati</taxon>
        <taxon>Pseudomonadota</taxon>
        <taxon>Gammaproteobacteria</taxon>
        <taxon>Enterobacterales</taxon>
        <taxon>Yersiniaceae</taxon>
        <taxon>Yersinia</taxon>
    </lineage>
</organism>
<sequence length="228" mass="25332">MSVYSLPPAPPSDEHQLFQRAQALSGFTLGELATRAQWVIPADLKRVKGWVGMLLEFYLGASAGSKPEQDFADIGIELKTIPISAQGKPLETTFVCVAPLTGNSGVTWESSHVRHKLARVLWVPVEGERHIPLAERRVGAPLLWSPNVEEEELLRRDWEELMDLIVLGKVESITARHGQVLQLRPKAANSRALTEAIGEFGQPIMTLPRGFYLKKTLTAPMLARHFLL</sequence>
<reference key="1">
    <citation type="journal article" date="2006" name="J. Bacteriol.">
        <title>Complete genome sequence of Yersinia pestis strains Antiqua and Nepal516: evidence of gene reduction in an emerging pathogen.</title>
        <authorList>
            <person name="Chain P.S.G."/>
            <person name="Hu P."/>
            <person name="Malfatti S.A."/>
            <person name="Radnedge L."/>
            <person name="Larimer F."/>
            <person name="Vergez L.M."/>
            <person name="Worsham P."/>
            <person name="Chu M.C."/>
            <person name="Andersen G.L."/>
        </authorList>
    </citation>
    <scope>NUCLEOTIDE SEQUENCE [LARGE SCALE GENOMIC DNA]</scope>
    <source>
        <strain>Antiqua</strain>
    </source>
</reference>
<accession>Q1CAS3</accession>
<feature type="chain" id="PRO_1000046719" description="DNA mismatch repair protein MutH">
    <location>
        <begin position="1"/>
        <end position="228"/>
    </location>
</feature>
<protein>
    <recommendedName>
        <fullName evidence="1">DNA mismatch repair protein MutH</fullName>
    </recommendedName>
    <alternativeName>
        <fullName evidence="1">Methyl-directed mismatch repair protein</fullName>
    </alternativeName>
</protein>
<proteinExistence type="inferred from homology"/>